<feature type="chain" id="PRO_1000026366" description="Phosphoenolpyruvate carboxykinase (ATP)">
    <location>
        <begin position="1"/>
        <end position="539"/>
    </location>
</feature>
<feature type="binding site" evidence="1">
    <location>
        <position position="64"/>
    </location>
    <ligand>
        <name>substrate</name>
    </ligand>
</feature>
<feature type="binding site" evidence="1">
    <location>
        <position position="206"/>
    </location>
    <ligand>
        <name>substrate</name>
    </ligand>
</feature>
<feature type="binding site" evidence="1">
    <location>
        <position position="212"/>
    </location>
    <ligand>
        <name>ATP</name>
        <dbReference type="ChEBI" id="CHEBI:30616"/>
    </ligand>
</feature>
<feature type="binding site" evidence="1">
    <location>
        <position position="212"/>
    </location>
    <ligand>
        <name>Mn(2+)</name>
        <dbReference type="ChEBI" id="CHEBI:29035"/>
    </ligand>
</feature>
<feature type="binding site" evidence="1">
    <location>
        <position position="212"/>
    </location>
    <ligand>
        <name>substrate</name>
    </ligand>
</feature>
<feature type="binding site" evidence="1">
    <location>
        <position position="231"/>
    </location>
    <ligand>
        <name>ATP</name>
        <dbReference type="ChEBI" id="CHEBI:30616"/>
    </ligand>
</feature>
<feature type="binding site" evidence="1">
    <location>
        <position position="231"/>
    </location>
    <ligand>
        <name>Mn(2+)</name>
        <dbReference type="ChEBI" id="CHEBI:29035"/>
    </ligand>
</feature>
<feature type="binding site" evidence="1">
    <location>
        <begin position="247"/>
        <end position="255"/>
    </location>
    <ligand>
        <name>ATP</name>
        <dbReference type="ChEBI" id="CHEBI:30616"/>
    </ligand>
</feature>
<feature type="binding site" evidence="1">
    <location>
        <position position="268"/>
    </location>
    <ligand>
        <name>Mn(2+)</name>
        <dbReference type="ChEBI" id="CHEBI:29035"/>
    </ligand>
</feature>
<feature type="binding site" evidence="1">
    <location>
        <position position="296"/>
    </location>
    <ligand>
        <name>ATP</name>
        <dbReference type="ChEBI" id="CHEBI:30616"/>
    </ligand>
</feature>
<feature type="binding site" evidence="1">
    <location>
        <position position="332"/>
    </location>
    <ligand>
        <name>ATP</name>
        <dbReference type="ChEBI" id="CHEBI:30616"/>
    </ligand>
</feature>
<feature type="binding site" evidence="1">
    <location>
        <position position="332"/>
    </location>
    <ligand>
        <name>substrate</name>
    </ligand>
</feature>
<feature type="binding site" evidence="1">
    <location>
        <begin position="448"/>
        <end position="449"/>
    </location>
    <ligand>
        <name>ATP</name>
        <dbReference type="ChEBI" id="CHEBI:30616"/>
    </ligand>
</feature>
<feature type="binding site" evidence="1">
    <location>
        <position position="454"/>
    </location>
    <ligand>
        <name>ATP</name>
        <dbReference type="ChEBI" id="CHEBI:30616"/>
    </ligand>
</feature>
<protein>
    <recommendedName>
        <fullName evidence="1">Phosphoenolpyruvate carboxykinase (ATP)</fullName>
        <shortName evidence="1">PCK</shortName>
        <shortName evidence="1">PEP carboxykinase</shortName>
        <shortName evidence="1">PEPCK</shortName>
        <ecNumber evidence="1">4.1.1.49</ecNumber>
    </recommendedName>
</protein>
<gene>
    <name evidence="1" type="primary">pckA</name>
    <name type="ordered locus">YPN_3927</name>
    <name type="ORF">YP516_4457</name>
</gene>
<keyword id="KW-0067">ATP-binding</keyword>
<keyword id="KW-0963">Cytoplasm</keyword>
<keyword id="KW-0210">Decarboxylase</keyword>
<keyword id="KW-0312">Gluconeogenesis</keyword>
<keyword id="KW-0456">Lyase</keyword>
<keyword id="KW-0464">Manganese</keyword>
<keyword id="KW-0479">Metal-binding</keyword>
<keyword id="KW-0547">Nucleotide-binding</keyword>
<sequence>MSVKGITPQELAAYGIHNVSEIVYNPSYDLLFEEETKPTLEGYERGTLTTTGAIAVDTGIFTGRSPKDKYIVRDAITQDTVWWADQGKGKNDNKPLSQEIWNHLKGLVTEQLSGKRLFVVDTFCGANADTRLQVRFITEVAWQAHFVKNMFIRPSDEELARFEPDFIVMNGAKCTNPQWKEQGLNSENFVAFNLTERMQLIGGTWYGGEMKKGMFSMMNYLLPLKGIASMHCSANVGEKGDVAIFFGLSGTGKTTLSTDPKRKLIGDDEHGWDDDGVFNFEGGCYAKTIKLSEEAEPDIYHAIKRDALLENVVVLADGTVDFNDGSKTENTRVSYPIYHIDNIVKPVSKAGHATKVIFLTADAFGVLPPVSRLTANQTQYHFLSGFTAKLAGTERGVTEPTPTFSACFGAAFLSLHPTQYAEVLVKRMQAVGAQAYLVNTGWNGTGKRISIKDTRAIIDAILNGEIDKAETFTLPIFDLAVPMALPGVNPDILDPRDTYADKAQWQEKAEDLAKRFATNFDKYTDTPAGAALVSAGPKI</sequence>
<organism>
    <name type="scientific">Yersinia pestis bv. Antiqua (strain Nepal516)</name>
    <dbReference type="NCBI Taxonomy" id="377628"/>
    <lineage>
        <taxon>Bacteria</taxon>
        <taxon>Pseudomonadati</taxon>
        <taxon>Pseudomonadota</taxon>
        <taxon>Gammaproteobacteria</taxon>
        <taxon>Enterobacterales</taxon>
        <taxon>Yersiniaceae</taxon>
        <taxon>Yersinia</taxon>
    </lineage>
</organism>
<dbReference type="EC" id="4.1.1.49" evidence="1"/>
<dbReference type="EMBL" id="CP000305">
    <property type="protein sequence ID" value="ABG20254.1"/>
    <property type="molecule type" value="Genomic_DNA"/>
</dbReference>
<dbReference type="EMBL" id="ACNQ01000019">
    <property type="protein sequence ID" value="EEO74847.1"/>
    <property type="molecule type" value="Genomic_DNA"/>
</dbReference>
<dbReference type="RefSeq" id="WP_002208912.1">
    <property type="nucleotide sequence ID" value="NZ_ACNQ01000019.1"/>
</dbReference>
<dbReference type="SMR" id="Q1CCM6"/>
<dbReference type="GeneID" id="57974462"/>
<dbReference type="KEGG" id="ypn:YPN_3927"/>
<dbReference type="HOGENOM" id="CLU_018247_0_1_6"/>
<dbReference type="UniPathway" id="UPA00138"/>
<dbReference type="Proteomes" id="UP000008936">
    <property type="component" value="Chromosome"/>
</dbReference>
<dbReference type="GO" id="GO:0005829">
    <property type="term" value="C:cytosol"/>
    <property type="evidence" value="ECO:0007669"/>
    <property type="project" value="TreeGrafter"/>
</dbReference>
<dbReference type="GO" id="GO:0005524">
    <property type="term" value="F:ATP binding"/>
    <property type="evidence" value="ECO:0007669"/>
    <property type="project" value="UniProtKB-UniRule"/>
</dbReference>
<dbReference type="GO" id="GO:0046872">
    <property type="term" value="F:metal ion binding"/>
    <property type="evidence" value="ECO:0007669"/>
    <property type="project" value="UniProtKB-KW"/>
</dbReference>
<dbReference type="GO" id="GO:0004612">
    <property type="term" value="F:phosphoenolpyruvate carboxykinase (ATP) activity"/>
    <property type="evidence" value="ECO:0007669"/>
    <property type="project" value="UniProtKB-UniRule"/>
</dbReference>
<dbReference type="GO" id="GO:0006094">
    <property type="term" value="P:gluconeogenesis"/>
    <property type="evidence" value="ECO:0007669"/>
    <property type="project" value="UniProtKB-UniRule"/>
</dbReference>
<dbReference type="CDD" id="cd00484">
    <property type="entry name" value="PEPCK_ATP"/>
    <property type="match status" value="1"/>
</dbReference>
<dbReference type="FunFam" id="2.170.8.10:FF:000001">
    <property type="entry name" value="Phosphoenolpyruvate carboxykinase (ATP)"/>
    <property type="match status" value="1"/>
</dbReference>
<dbReference type="FunFam" id="3.40.449.10:FF:000001">
    <property type="entry name" value="Phosphoenolpyruvate carboxykinase (ATP)"/>
    <property type="match status" value="1"/>
</dbReference>
<dbReference type="Gene3D" id="3.90.228.20">
    <property type="match status" value="1"/>
</dbReference>
<dbReference type="Gene3D" id="3.40.449.10">
    <property type="entry name" value="Phosphoenolpyruvate Carboxykinase, domain 1"/>
    <property type="match status" value="1"/>
</dbReference>
<dbReference type="Gene3D" id="2.170.8.10">
    <property type="entry name" value="Phosphoenolpyruvate Carboxykinase, domain 2"/>
    <property type="match status" value="1"/>
</dbReference>
<dbReference type="HAMAP" id="MF_00453">
    <property type="entry name" value="PEPCK_ATP"/>
    <property type="match status" value="1"/>
</dbReference>
<dbReference type="InterPro" id="IPR001272">
    <property type="entry name" value="PEP_carboxykinase_ATP"/>
</dbReference>
<dbReference type="InterPro" id="IPR013035">
    <property type="entry name" value="PEP_carboxykinase_C"/>
</dbReference>
<dbReference type="InterPro" id="IPR008210">
    <property type="entry name" value="PEP_carboxykinase_N"/>
</dbReference>
<dbReference type="InterPro" id="IPR015994">
    <property type="entry name" value="PEPCK_ATP_CS"/>
</dbReference>
<dbReference type="NCBIfam" id="TIGR00224">
    <property type="entry name" value="pckA"/>
    <property type="match status" value="1"/>
</dbReference>
<dbReference type="NCBIfam" id="NF006819">
    <property type="entry name" value="PRK09344.1-1"/>
    <property type="match status" value="1"/>
</dbReference>
<dbReference type="NCBIfam" id="NF006820">
    <property type="entry name" value="PRK09344.1-2"/>
    <property type="match status" value="1"/>
</dbReference>
<dbReference type="NCBIfam" id="NF006821">
    <property type="entry name" value="PRK09344.1-3"/>
    <property type="match status" value="1"/>
</dbReference>
<dbReference type="PANTHER" id="PTHR30031:SF0">
    <property type="entry name" value="PHOSPHOENOLPYRUVATE CARBOXYKINASE (ATP)"/>
    <property type="match status" value="1"/>
</dbReference>
<dbReference type="PANTHER" id="PTHR30031">
    <property type="entry name" value="PHOSPHOENOLPYRUVATE CARBOXYKINASE ATP"/>
    <property type="match status" value="1"/>
</dbReference>
<dbReference type="Pfam" id="PF01293">
    <property type="entry name" value="PEPCK_ATP"/>
    <property type="match status" value="1"/>
</dbReference>
<dbReference type="PIRSF" id="PIRSF006294">
    <property type="entry name" value="PEP_crbxkin"/>
    <property type="match status" value="1"/>
</dbReference>
<dbReference type="SUPFAM" id="SSF68923">
    <property type="entry name" value="PEP carboxykinase N-terminal domain"/>
    <property type="match status" value="1"/>
</dbReference>
<dbReference type="SUPFAM" id="SSF53795">
    <property type="entry name" value="PEP carboxykinase-like"/>
    <property type="match status" value="1"/>
</dbReference>
<dbReference type="PROSITE" id="PS00532">
    <property type="entry name" value="PEPCK_ATP"/>
    <property type="match status" value="1"/>
</dbReference>
<comment type="function">
    <text evidence="1">Involved in the gluconeogenesis. Catalyzes the conversion of oxaloacetate (OAA) to phosphoenolpyruvate (PEP) through direct phosphoryl transfer between the nucleoside triphosphate and OAA.</text>
</comment>
<comment type="catalytic activity">
    <reaction evidence="1">
        <text>oxaloacetate + ATP = phosphoenolpyruvate + ADP + CO2</text>
        <dbReference type="Rhea" id="RHEA:18617"/>
        <dbReference type="ChEBI" id="CHEBI:16452"/>
        <dbReference type="ChEBI" id="CHEBI:16526"/>
        <dbReference type="ChEBI" id="CHEBI:30616"/>
        <dbReference type="ChEBI" id="CHEBI:58702"/>
        <dbReference type="ChEBI" id="CHEBI:456216"/>
        <dbReference type="EC" id="4.1.1.49"/>
    </reaction>
</comment>
<comment type="cofactor">
    <cofactor evidence="1">
        <name>Mn(2+)</name>
        <dbReference type="ChEBI" id="CHEBI:29035"/>
    </cofactor>
    <text evidence="1">Binds 1 Mn(2+) ion per subunit.</text>
</comment>
<comment type="pathway">
    <text evidence="1">Carbohydrate biosynthesis; gluconeogenesis.</text>
</comment>
<comment type="subunit">
    <text evidence="1">Monomer.</text>
</comment>
<comment type="subcellular location">
    <subcellularLocation>
        <location evidence="1">Cytoplasm</location>
    </subcellularLocation>
</comment>
<comment type="similarity">
    <text evidence="1">Belongs to the phosphoenolpyruvate carboxykinase (ATP) family.</text>
</comment>
<evidence type="ECO:0000255" key="1">
    <source>
        <dbReference type="HAMAP-Rule" id="MF_00453"/>
    </source>
</evidence>
<proteinExistence type="inferred from homology"/>
<name>PCKA_YERPN</name>
<accession>Q1CCM6</accession>
<accession>D1Q2U4</accession>
<reference key="1">
    <citation type="journal article" date="2006" name="J. Bacteriol.">
        <title>Complete genome sequence of Yersinia pestis strains Antiqua and Nepal516: evidence of gene reduction in an emerging pathogen.</title>
        <authorList>
            <person name="Chain P.S.G."/>
            <person name="Hu P."/>
            <person name="Malfatti S.A."/>
            <person name="Radnedge L."/>
            <person name="Larimer F."/>
            <person name="Vergez L.M."/>
            <person name="Worsham P."/>
            <person name="Chu M.C."/>
            <person name="Andersen G.L."/>
        </authorList>
    </citation>
    <scope>NUCLEOTIDE SEQUENCE [LARGE SCALE GENOMIC DNA]</scope>
    <source>
        <strain>Nepal516</strain>
    </source>
</reference>
<reference key="2">
    <citation type="submission" date="2009-04" db="EMBL/GenBank/DDBJ databases">
        <title>Yersinia pestis Nepal516A whole genome shotgun sequencing project.</title>
        <authorList>
            <person name="Plunkett G. III"/>
            <person name="Anderson B.D."/>
            <person name="Baumler D.J."/>
            <person name="Burland V."/>
            <person name="Cabot E.L."/>
            <person name="Glasner J.D."/>
            <person name="Mau B."/>
            <person name="Neeno-Eckwall E."/>
            <person name="Perna N.T."/>
            <person name="Munk A.C."/>
            <person name="Tapia R."/>
            <person name="Green L.D."/>
            <person name="Rogers Y.C."/>
            <person name="Detter J.C."/>
            <person name="Bruce D.C."/>
            <person name="Brettin T.S."/>
        </authorList>
    </citation>
    <scope>NUCLEOTIDE SEQUENCE [LARGE SCALE GENOMIC DNA]</scope>
    <source>
        <strain>Nepal516</strain>
    </source>
</reference>